<protein>
    <recommendedName>
        <fullName evidence="1">Acetyl-coenzyme A carboxylase carboxyl transferase subunit alpha</fullName>
        <shortName evidence="1">ACCase subunit alpha</shortName>
        <shortName evidence="1">Acetyl-CoA carboxylase carboxyltransferase subunit alpha</shortName>
        <ecNumber evidence="1">2.1.3.15</ecNumber>
    </recommendedName>
</protein>
<keyword id="KW-0067">ATP-binding</keyword>
<keyword id="KW-0963">Cytoplasm</keyword>
<keyword id="KW-0275">Fatty acid biosynthesis</keyword>
<keyword id="KW-0276">Fatty acid metabolism</keyword>
<keyword id="KW-0444">Lipid biosynthesis</keyword>
<keyword id="KW-0443">Lipid metabolism</keyword>
<keyword id="KW-0547">Nucleotide-binding</keyword>
<keyword id="KW-0808">Transferase</keyword>
<organism>
    <name type="scientific">Salmonella newport (strain SL254)</name>
    <dbReference type="NCBI Taxonomy" id="423368"/>
    <lineage>
        <taxon>Bacteria</taxon>
        <taxon>Pseudomonadati</taxon>
        <taxon>Pseudomonadota</taxon>
        <taxon>Gammaproteobacteria</taxon>
        <taxon>Enterobacterales</taxon>
        <taxon>Enterobacteriaceae</taxon>
        <taxon>Salmonella</taxon>
    </lineage>
</organism>
<evidence type="ECO:0000255" key="1">
    <source>
        <dbReference type="HAMAP-Rule" id="MF_00823"/>
    </source>
</evidence>
<evidence type="ECO:0000255" key="2">
    <source>
        <dbReference type="PROSITE-ProRule" id="PRU01137"/>
    </source>
</evidence>
<accession>B4SV14</accession>
<comment type="function">
    <text evidence="1">Component of the acetyl coenzyme A carboxylase (ACC) complex. First, biotin carboxylase catalyzes the carboxylation of biotin on its carrier protein (BCCP) and then the CO(2) group is transferred by the carboxyltransferase to acetyl-CoA to form malonyl-CoA.</text>
</comment>
<comment type="catalytic activity">
    <reaction evidence="1">
        <text>N(6)-carboxybiotinyl-L-lysyl-[protein] + acetyl-CoA = N(6)-biotinyl-L-lysyl-[protein] + malonyl-CoA</text>
        <dbReference type="Rhea" id="RHEA:54728"/>
        <dbReference type="Rhea" id="RHEA-COMP:10505"/>
        <dbReference type="Rhea" id="RHEA-COMP:10506"/>
        <dbReference type="ChEBI" id="CHEBI:57288"/>
        <dbReference type="ChEBI" id="CHEBI:57384"/>
        <dbReference type="ChEBI" id="CHEBI:83144"/>
        <dbReference type="ChEBI" id="CHEBI:83145"/>
        <dbReference type="EC" id="2.1.3.15"/>
    </reaction>
</comment>
<comment type="pathway">
    <text evidence="1">Lipid metabolism; malonyl-CoA biosynthesis; malonyl-CoA from acetyl-CoA: step 1/1.</text>
</comment>
<comment type="subunit">
    <text evidence="1">Acetyl-CoA carboxylase is a heterohexamer composed of biotin carboxyl carrier protein (AccB), biotin carboxylase (AccC) and two subunits each of ACCase subunit alpha (AccA) and ACCase subunit beta (AccD).</text>
</comment>
<comment type="subcellular location">
    <subcellularLocation>
        <location evidence="1">Cytoplasm</location>
    </subcellularLocation>
</comment>
<comment type="similarity">
    <text evidence="1">Belongs to the AccA family.</text>
</comment>
<sequence length="319" mass="35344">MSLNFLDFEQPIAELEAKIDSLTAVSRQDEKLDINIDEEVHRLREKSVELTRKIFADLGAWQVAQLARHPQRPYTLDYVRLAFDEFDELAGDRAYADDKAIVGGIARLEGRPVMIIGHQKGRETKEKIRRNFGMPAPEGYRKALRLMEMAERFNMPIITFIDTPGAYPGVGAEERGQSEAIARNLREMSRLNVPVICTVIGEGGSGGALAIGVGDKVNMLQYSTYSVISPEGCASILWKSADKAPLAAEAMGIIAPRLKELKLIDSIIPEPLGGAHRNPEAMAASLKAQLLEDLADLDVLSTDDLKNRRYQRLMSYGYA</sequence>
<name>ACCA_SALNS</name>
<dbReference type="EC" id="2.1.3.15" evidence="1"/>
<dbReference type="EMBL" id="CP001113">
    <property type="protein sequence ID" value="ACF63648.1"/>
    <property type="molecule type" value="Genomic_DNA"/>
</dbReference>
<dbReference type="RefSeq" id="WP_000055753.1">
    <property type="nucleotide sequence ID" value="NZ_CCMR01000003.1"/>
</dbReference>
<dbReference type="SMR" id="B4SV14"/>
<dbReference type="KEGG" id="see:SNSL254_A0254"/>
<dbReference type="HOGENOM" id="CLU_015486_0_2_6"/>
<dbReference type="UniPathway" id="UPA00655">
    <property type="reaction ID" value="UER00711"/>
</dbReference>
<dbReference type="Proteomes" id="UP000008824">
    <property type="component" value="Chromosome"/>
</dbReference>
<dbReference type="GO" id="GO:0009317">
    <property type="term" value="C:acetyl-CoA carboxylase complex"/>
    <property type="evidence" value="ECO:0007669"/>
    <property type="project" value="InterPro"/>
</dbReference>
<dbReference type="GO" id="GO:0003989">
    <property type="term" value="F:acetyl-CoA carboxylase activity"/>
    <property type="evidence" value="ECO:0007669"/>
    <property type="project" value="InterPro"/>
</dbReference>
<dbReference type="GO" id="GO:0005524">
    <property type="term" value="F:ATP binding"/>
    <property type="evidence" value="ECO:0007669"/>
    <property type="project" value="UniProtKB-KW"/>
</dbReference>
<dbReference type="GO" id="GO:0016743">
    <property type="term" value="F:carboxyl- or carbamoyltransferase activity"/>
    <property type="evidence" value="ECO:0007669"/>
    <property type="project" value="UniProtKB-UniRule"/>
</dbReference>
<dbReference type="GO" id="GO:0006633">
    <property type="term" value="P:fatty acid biosynthetic process"/>
    <property type="evidence" value="ECO:0007669"/>
    <property type="project" value="UniProtKB-KW"/>
</dbReference>
<dbReference type="GO" id="GO:2001295">
    <property type="term" value="P:malonyl-CoA biosynthetic process"/>
    <property type="evidence" value="ECO:0007669"/>
    <property type="project" value="UniProtKB-UniRule"/>
</dbReference>
<dbReference type="FunFam" id="3.90.226.10:FF:000008">
    <property type="entry name" value="Acetyl-coenzyme A carboxylase carboxyl transferase subunit alpha"/>
    <property type="match status" value="1"/>
</dbReference>
<dbReference type="Gene3D" id="3.90.226.10">
    <property type="entry name" value="2-enoyl-CoA Hydratase, Chain A, domain 1"/>
    <property type="match status" value="1"/>
</dbReference>
<dbReference type="HAMAP" id="MF_00823">
    <property type="entry name" value="AcetylCoA_CT_alpha"/>
    <property type="match status" value="1"/>
</dbReference>
<dbReference type="InterPro" id="IPR001095">
    <property type="entry name" value="Acetyl_CoA_COase_a_su"/>
</dbReference>
<dbReference type="InterPro" id="IPR029045">
    <property type="entry name" value="ClpP/crotonase-like_dom_sf"/>
</dbReference>
<dbReference type="InterPro" id="IPR011763">
    <property type="entry name" value="COA_CT_C"/>
</dbReference>
<dbReference type="NCBIfam" id="TIGR00513">
    <property type="entry name" value="accA"/>
    <property type="match status" value="1"/>
</dbReference>
<dbReference type="NCBIfam" id="NF041504">
    <property type="entry name" value="AccA_sub"/>
    <property type="match status" value="1"/>
</dbReference>
<dbReference type="NCBIfam" id="NF004344">
    <property type="entry name" value="PRK05724.1"/>
    <property type="match status" value="1"/>
</dbReference>
<dbReference type="PANTHER" id="PTHR42853">
    <property type="entry name" value="ACETYL-COENZYME A CARBOXYLASE CARBOXYL TRANSFERASE SUBUNIT ALPHA"/>
    <property type="match status" value="1"/>
</dbReference>
<dbReference type="PANTHER" id="PTHR42853:SF3">
    <property type="entry name" value="ACETYL-COENZYME A CARBOXYLASE CARBOXYL TRANSFERASE SUBUNIT ALPHA, CHLOROPLASTIC"/>
    <property type="match status" value="1"/>
</dbReference>
<dbReference type="Pfam" id="PF03255">
    <property type="entry name" value="ACCA"/>
    <property type="match status" value="1"/>
</dbReference>
<dbReference type="PRINTS" id="PR01069">
    <property type="entry name" value="ACCCTRFRASEA"/>
</dbReference>
<dbReference type="SUPFAM" id="SSF52096">
    <property type="entry name" value="ClpP/crotonase"/>
    <property type="match status" value="1"/>
</dbReference>
<dbReference type="PROSITE" id="PS50989">
    <property type="entry name" value="COA_CT_CTER"/>
    <property type="match status" value="1"/>
</dbReference>
<reference key="1">
    <citation type="journal article" date="2011" name="J. Bacteriol.">
        <title>Comparative genomics of 28 Salmonella enterica isolates: evidence for CRISPR-mediated adaptive sublineage evolution.</title>
        <authorList>
            <person name="Fricke W.F."/>
            <person name="Mammel M.K."/>
            <person name="McDermott P.F."/>
            <person name="Tartera C."/>
            <person name="White D.G."/>
            <person name="Leclerc J.E."/>
            <person name="Ravel J."/>
            <person name="Cebula T.A."/>
        </authorList>
    </citation>
    <scope>NUCLEOTIDE SEQUENCE [LARGE SCALE GENOMIC DNA]</scope>
    <source>
        <strain>SL254</strain>
    </source>
</reference>
<gene>
    <name evidence="1" type="primary">accA</name>
    <name type="ordered locus">SNSL254_A0254</name>
</gene>
<proteinExistence type="inferred from homology"/>
<feature type="chain" id="PRO_1000134519" description="Acetyl-coenzyme A carboxylase carboxyl transferase subunit alpha">
    <location>
        <begin position="1"/>
        <end position="319"/>
    </location>
</feature>
<feature type="domain" description="CoA carboxyltransferase C-terminal" evidence="2">
    <location>
        <begin position="35"/>
        <end position="296"/>
    </location>
</feature>